<name>TTC29_HUMAN</name>
<proteinExistence type="evidence at protein level"/>
<protein>
    <recommendedName>
        <fullName>Tetratricopeptide repeat protein 29</fullName>
        <shortName>TPR repeat protein 29</shortName>
    </recommendedName>
    <alternativeName>
        <fullName>Protein TBPP2A</fullName>
    </alternativeName>
    <alternativeName>
        <fullName>Testis development protein NYD-SP14</fullName>
    </alternativeName>
</protein>
<reference key="1">
    <citation type="submission" date="2001-02" db="EMBL/GenBank/DDBJ databases">
        <title>Cloning and identification of a novel gene related development gene NYD-SP14.</title>
        <authorList>
            <person name="Sha J.H."/>
        </authorList>
    </citation>
    <scope>NUCLEOTIDE SEQUENCE [MRNA] (ISOFORM 1)</scope>
    <scope>VARIANTS TYR-140 AND THR-276</scope>
    <source>
        <tissue>Testis</tissue>
    </source>
</reference>
<reference key="2">
    <citation type="submission" date="2007-02" db="EMBL/GenBank/DDBJ databases">
        <authorList>
            <person name="Li J.M."/>
            <person name="Cheng J."/>
            <person name="Wang Q."/>
        </authorList>
    </citation>
    <scope>NUCLEOTIDE SEQUENCE [MRNA] (ISOFORM 1)</scope>
    <scope>VARIANTS TYR-140 AND THR-276</scope>
    <source>
        <tissue>Mammary cancer</tissue>
    </source>
</reference>
<reference key="3">
    <citation type="journal article" date="2004" name="Nat. Genet.">
        <title>Complete sequencing and characterization of 21,243 full-length human cDNAs.</title>
        <authorList>
            <person name="Ota T."/>
            <person name="Suzuki Y."/>
            <person name="Nishikawa T."/>
            <person name="Otsuki T."/>
            <person name="Sugiyama T."/>
            <person name="Irie R."/>
            <person name="Wakamatsu A."/>
            <person name="Hayashi K."/>
            <person name="Sato H."/>
            <person name="Nagai K."/>
            <person name="Kimura K."/>
            <person name="Makita H."/>
            <person name="Sekine M."/>
            <person name="Obayashi M."/>
            <person name="Nishi T."/>
            <person name="Shibahara T."/>
            <person name="Tanaka T."/>
            <person name="Ishii S."/>
            <person name="Yamamoto J."/>
            <person name="Saito K."/>
            <person name="Kawai Y."/>
            <person name="Isono Y."/>
            <person name="Nakamura Y."/>
            <person name="Nagahari K."/>
            <person name="Murakami K."/>
            <person name="Yasuda T."/>
            <person name="Iwayanagi T."/>
            <person name="Wagatsuma M."/>
            <person name="Shiratori A."/>
            <person name="Sudo H."/>
            <person name="Hosoiri T."/>
            <person name="Kaku Y."/>
            <person name="Kodaira H."/>
            <person name="Kondo H."/>
            <person name="Sugawara M."/>
            <person name="Takahashi M."/>
            <person name="Kanda K."/>
            <person name="Yokoi T."/>
            <person name="Furuya T."/>
            <person name="Kikkawa E."/>
            <person name="Omura Y."/>
            <person name="Abe K."/>
            <person name="Kamihara K."/>
            <person name="Katsuta N."/>
            <person name="Sato K."/>
            <person name="Tanikawa M."/>
            <person name="Yamazaki M."/>
            <person name="Ninomiya K."/>
            <person name="Ishibashi T."/>
            <person name="Yamashita H."/>
            <person name="Murakawa K."/>
            <person name="Fujimori K."/>
            <person name="Tanai H."/>
            <person name="Kimata M."/>
            <person name="Watanabe M."/>
            <person name="Hiraoka S."/>
            <person name="Chiba Y."/>
            <person name="Ishida S."/>
            <person name="Ono Y."/>
            <person name="Takiguchi S."/>
            <person name="Watanabe S."/>
            <person name="Yosida M."/>
            <person name="Hotuta T."/>
            <person name="Kusano J."/>
            <person name="Kanehori K."/>
            <person name="Takahashi-Fujii A."/>
            <person name="Hara H."/>
            <person name="Tanase T.-O."/>
            <person name="Nomura Y."/>
            <person name="Togiya S."/>
            <person name="Komai F."/>
            <person name="Hara R."/>
            <person name="Takeuchi K."/>
            <person name="Arita M."/>
            <person name="Imose N."/>
            <person name="Musashino K."/>
            <person name="Yuuki H."/>
            <person name="Oshima A."/>
            <person name="Sasaki N."/>
            <person name="Aotsuka S."/>
            <person name="Yoshikawa Y."/>
            <person name="Matsunawa H."/>
            <person name="Ichihara T."/>
            <person name="Shiohata N."/>
            <person name="Sano S."/>
            <person name="Moriya S."/>
            <person name="Momiyama H."/>
            <person name="Satoh N."/>
            <person name="Takami S."/>
            <person name="Terashima Y."/>
            <person name="Suzuki O."/>
            <person name="Nakagawa S."/>
            <person name="Senoh A."/>
            <person name="Mizoguchi H."/>
            <person name="Goto Y."/>
            <person name="Shimizu F."/>
            <person name="Wakebe H."/>
            <person name="Hishigaki H."/>
            <person name="Watanabe T."/>
            <person name="Sugiyama A."/>
            <person name="Takemoto M."/>
            <person name="Kawakami B."/>
            <person name="Yamazaki M."/>
            <person name="Watanabe K."/>
            <person name="Kumagai A."/>
            <person name="Itakura S."/>
            <person name="Fukuzumi Y."/>
            <person name="Fujimori Y."/>
            <person name="Komiyama M."/>
            <person name="Tashiro H."/>
            <person name="Tanigami A."/>
            <person name="Fujiwara T."/>
            <person name="Ono T."/>
            <person name="Yamada K."/>
            <person name="Fujii Y."/>
            <person name="Ozaki K."/>
            <person name="Hirao M."/>
            <person name="Ohmori Y."/>
            <person name="Kawabata A."/>
            <person name="Hikiji T."/>
            <person name="Kobatake N."/>
            <person name="Inagaki H."/>
            <person name="Ikema Y."/>
            <person name="Okamoto S."/>
            <person name="Okitani R."/>
            <person name="Kawakami T."/>
            <person name="Noguchi S."/>
            <person name="Itoh T."/>
            <person name="Shigeta K."/>
            <person name="Senba T."/>
            <person name="Matsumura K."/>
            <person name="Nakajima Y."/>
            <person name="Mizuno T."/>
            <person name="Morinaga M."/>
            <person name="Sasaki M."/>
            <person name="Togashi T."/>
            <person name="Oyama M."/>
            <person name="Hata H."/>
            <person name="Watanabe M."/>
            <person name="Komatsu T."/>
            <person name="Mizushima-Sugano J."/>
            <person name="Satoh T."/>
            <person name="Shirai Y."/>
            <person name="Takahashi Y."/>
            <person name="Nakagawa K."/>
            <person name="Okumura K."/>
            <person name="Nagase T."/>
            <person name="Nomura N."/>
            <person name="Kikuchi H."/>
            <person name="Masuho Y."/>
            <person name="Yamashita R."/>
            <person name="Nakai K."/>
            <person name="Yada T."/>
            <person name="Nakamura Y."/>
            <person name="Ohara O."/>
            <person name="Isogai T."/>
            <person name="Sugano S."/>
        </authorList>
    </citation>
    <scope>NUCLEOTIDE SEQUENCE [LARGE SCALE MRNA] (ISOFORM 2)</scope>
    <source>
        <tissue>Testis</tissue>
    </source>
</reference>
<reference key="4">
    <citation type="journal article" date="2005" name="Nature">
        <title>Generation and annotation of the DNA sequences of human chromosomes 2 and 4.</title>
        <authorList>
            <person name="Hillier L.W."/>
            <person name="Graves T.A."/>
            <person name="Fulton R.S."/>
            <person name="Fulton L.A."/>
            <person name="Pepin K.H."/>
            <person name="Minx P."/>
            <person name="Wagner-McPherson C."/>
            <person name="Layman D."/>
            <person name="Wylie K."/>
            <person name="Sekhon M."/>
            <person name="Becker M.C."/>
            <person name="Fewell G.A."/>
            <person name="Delehaunty K.D."/>
            <person name="Miner T.L."/>
            <person name="Nash W.E."/>
            <person name="Kremitzki C."/>
            <person name="Oddy L."/>
            <person name="Du H."/>
            <person name="Sun H."/>
            <person name="Bradshaw-Cordum H."/>
            <person name="Ali J."/>
            <person name="Carter J."/>
            <person name="Cordes M."/>
            <person name="Harris A."/>
            <person name="Isak A."/>
            <person name="van Brunt A."/>
            <person name="Nguyen C."/>
            <person name="Du F."/>
            <person name="Courtney L."/>
            <person name="Kalicki J."/>
            <person name="Ozersky P."/>
            <person name="Abbott S."/>
            <person name="Armstrong J."/>
            <person name="Belter E.A."/>
            <person name="Caruso L."/>
            <person name="Cedroni M."/>
            <person name="Cotton M."/>
            <person name="Davidson T."/>
            <person name="Desai A."/>
            <person name="Elliott G."/>
            <person name="Erb T."/>
            <person name="Fronick C."/>
            <person name="Gaige T."/>
            <person name="Haakenson W."/>
            <person name="Haglund K."/>
            <person name="Holmes A."/>
            <person name="Harkins R."/>
            <person name="Kim K."/>
            <person name="Kruchowski S.S."/>
            <person name="Strong C.M."/>
            <person name="Grewal N."/>
            <person name="Goyea E."/>
            <person name="Hou S."/>
            <person name="Levy A."/>
            <person name="Martinka S."/>
            <person name="Mead K."/>
            <person name="McLellan M.D."/>
            <person name="Meyer R."/>
            <person name="Randall-Maher J."/>
            <person name="Tomlinson C."/>
            <person name="Dauphin-Kohlberg S."/>
            <person name="Kozlowicz-Reilly A."/>
            <person name="Shah N."/>
            <person name="Swearengen-Shahid S."/>
            <person name="Snider J."/>
            <person name="Strong J.T."/>
            <person name="Thompson J."/>
            <person name="Yoakum M."/>
            <person name="Leonard S."/>
            <person name="Pearman C."/>
            <person name="Trani L."/>
            <person name="Radionenko M."/>
            <person name="Waligorski J.E."/>
            <person name="Wang C."/>
            <person name="Rock S.M."/>
            <person name="Tin-Wollam A.-M."/>
            <person name="Maupin R."/>
            <person name="Latreille P."/>
            <person name="Wendl M.C."/>
            <person name="Yang S.-P."/>
            <person name="Pohl C."/>
            <person name="Wallis J.W."/>
            <person name="Spieth J."/>
            <person name="Bieri T.A."/>
            <person name="Berkowicz N."/>
            <person name="Nelson J.O."/>
            <person name="Osborne J."/>
            <person name="Ding L."/>
            <person name="Meyer R."/>
            <person name="Sabo A."/>
            <person name="Shotland Y."/>
            <person name="Sinha P."/>
            <person name="Wohldmann P.E."/>
            <person name="Cook L.L."/>
            <person name="Hickenbotham M.T."/>
            <person name="Eldred J."/>
            <person name="Williams D."/>
            <person name="Jones T.A."/>
            <person name="She X."/>
            <person name="Ciccarelli F.D."/>
            <person name="Izaurralde E."/>
            <person name="Taylor J."/>
            <person name="Schmutz J."/>
            <person name="Myers R.M."/>
            <person name="Cox D.R."/>
            <person name="Huang X."/>
            <person name="McPherson J.D."/>
            <person name="Mardis E.R."/>
            <person name="Clifton S.W."/>
            <person name="Warren W.C."/>
            <person name="Chinwalla A.T."/>
            <person name="Eddy S.R."/>
            <person name="Marra M.A."/>
            <person name="Ovcharenko I."/>
            <person name="Furey T.S."/>
            <person name="Miller W."/>
            <person name="Eichler E.E."/>
            <person name="Bork P."/>
            <person name="Suyama M."/>
            <person name="Torrents D."/>
            <person name="Waterston R.H."/>
            <person name="Wilson R.K."/>
        </authorList>
    </citation>
    <scope>NUCLEOTIDE SEQUENCE [LARGE SCALE GENOMIC DNA]</scope>
</reference>
<reference key="5">
    <citation type="journal article" date="2023" name="Elife">
        <title>Novel axonemal protein ZMYND12 interacts with TTC29 and DNAH1, and is required for male fertility and flagellum function.</title>
        <authorList>
            <person name="Dacheux D."/>
            <person name="Martinez G."/>
            <person name="Broster Reix C.E."/>
            <person name="Beurois J."/>
            <person name="Lores P."/>
            <person name="Tounkara M."/>
            <person name="Dupuy J.W."/>
            <person name="Robinson D.R."/>
            <person name="Loeuillet C."/>
            <person name="Lambert E."/>
            <person name="Wehbe Z."/>
            <person name="Escoffier J."/>
            <person name="Amiri-Yekta A."/>
            <person name="Daneshipour A."/>
            <person name="Hosseini S.H."/>
            <person name="Zouari R."/>
            <person name="Mustapha S.F.B."/>
            <person name="Halouani L."/>
            <person name="Jiang X."/>
            <person name="Shen Y."/>
            <person name="Liu C."/>
            <person name="Thierry-Mieg N."/>
            <person name="Septier A."/>
            <person name="Bidart M."/>
            <person name="Satre V."/>
            <person name="Cazin C."/>
            <person name="Kherraf Z.E."/>
            <person name="Arnoult C."/>
            <person name="Ray P.F."/>
            <person name="Toure A."/>
            <person name="Bonhivers M."/>
            <person name="Coutton C."/>
        </authorList>
    </citation>
    <scope>SUBCELLULAR LOCATION</scope>
</reference>
<reference key="6">
    <citation type="journal article" date="2019" name="Am. J. Hum. Genet.">
        <title>Mutations in TTC29, Encoding an Evolutionarily Conserved Axonemal Protein, Result in Asthenozoospermia and Male Infertility.</title>
        <authorList>
            <person name="Lores P."/>
            <person name="Dacheux D."/>
            <person name="Kherraf Z.E."/>
            <person name="Nsota Mbango J.F."/>
            <person name="Coutton C."/>
            <person name="Stouvenel L."/>
            <person name="Ialy-Radio C."/>
            <person name="Amiri-Yekta A."/>
            <person name="Whitfield M."/>
            <person name="Schmitt A."/>
            <person name="Cazin C."/>
            <person name="Givelet M."/>
            <person name="Ferreux L."/>
            <person name="Fourati Ben Mustapha S."/>
            <person name="Halouani L."/>
            <person name="Marrakchi O."/>
            <person name="Daneshipour A."/>
            <person name="El Khouri E."/>
            <person name="Do Cruzeiro M."/>
            <person name="Favier M."/>
            <person name="Guillonneau F."/>
            <person name="Chaudhry M."/>
            <person name="Sakheli Z."/>
            <person name="Wolf J.P."/>
            <person name="Patrat C."/>
            <person name="Gacon G."/>
            <person name="Savinov S.N."/>
            <person name="Hosseini S.H."/>
            <person name="Robinson D.R."/>
            <person name="Zouari R."/>
            <person name="Ziyyat A."/>
            <person name="Arnoult C."/>
            <person name="Dulioust E."/>
            <person name="Bonhivers M."/>
            <person name="Ray P.F."/>
            <person name="Toure A."/>
        </authorList>
    </citation>
    <scope>INVOLVEMENT IN SPGF42</scope>
    <scope>VARIANT SPGF42 250-TYR--THR-475 DEL</scope>
    <scope>SUBCELLULAR LOCATION</scope>
    <scope>TISSUE SPECIFICITY</scope>
    <scope>FUNCTION</scope>
    <scope>DOMAIN</scope>
</reference>
<reference key="7">
    <citation type="journal article" date="2019" name="Am. J. Hum. Genet.">
        <title>Bi-allelic Mutations in TTC29 Cause Male Subfertility with Asthenoteratospermia in Humans and Mice.</title>
        <authorList>
            <person name="Liu C."/>
            <person name="He X."/>
            <person name="Liu W."/>
            <person name="Yang S."/>
            <person name="Wang L."/>
            <person name="Li W."/>
            <person name="Wu H."/>
            <person name="Tang S."/>
            <person name="Ni X."/>
            <person name="Wang J."/>
            <person name="Gao Y."/>
            <person name="Tian S."/>
            <person name="Zhang L."/>
            <person name="Cong J."/>
            <person name="Zhang Z."/>
            <person name="Tan Q."/>
            <person name="Zhang J."/>
            <person name="Li H."/>
            <person name="Zhong Y."/>
            <person name="Lv M."/>
            <person name="Li J."/>
            <person name="Jin L."/>
            <person name="Cao Y."/>
            <person name="Zhang F."/>
        </authorList>
    </citation>
    <scope>INVOLVEMENT IN SPGF42</scope>
    <scope>VARIANT SPGF42 369-TYR--THR-475 DEL</scope>
    <scope>CHARACTERIZATION OF VARIANT SPGF42 369-TYR--THR-475 DEL</scope>
    <scope>SUBCELLULAR LOCATION</scope>
    <scope>TISSUE SPECIFICITY</scope>
    <scope>FUNCTION</scope>
</reference>
<evidence type="ECO:0000250" key="1">
    <source>
        <dbReference type="UniProtKB" id="Q57ZB2"/>
    </source>
</evidence>
<evidence type="ECO:0000255" key="2"/>
<evidence type="ECO:0000256" key="3">
    <source>
        <dbReference type="SAM" id="MobiDB-lite"/>
    </source>
</evidence>
<evidence type="ECO:0000269" key="4">
    <source>
    </source>
</evidence>
<evidence type="ECO:0000269" key="5">
    <source>
    </source>
</evidence>
<evidence type="ECO:0000269" key="6">
    <source>
    </source>
</evidence>
<evidence type="ECO:0000269" key="7">
    <source ref="1"/>
</evidence>
<evidence type="ECO:0000269" key="8">
    <source ref="2"/>
</evidence>
<evidence type="ECO:0000303" key="9">
    <source>
    </source>
</evidence>
<evidence type="ECO:0000305" key="10"/>
<evidence type="ECO:0000305" key="11">
    <source>
    </source>
</evidence>
<comment type="function">
    <text evidence="4 5">Axonemal protein which is implicated in axonemal and/or peri-axonemal structure assembly and regulates flagellum assembly and beating and therefore sperm motility.</text>
</comment>
<comment type="subcellular location">
    <subcellularLocation>
        <location evidence="4 5 6">Cytoplasm</location>
        <location evidence="4 5 6">Cytoskeleton</location>
        <location evidence="4 5 6">Flagellum axoneme</location>
    </subcellularLocation>
</comment>
<comment type="alternative products">
    <event type="alternative splicing"/>
    <isoform>
        <id>Q8NA56-1</id>
        <name>1</name>
        <sequence type="displayed"/>
    </isoform>
    <isoform>
        <id>Q8NA56-2</id>
        <name>2</name>
        <sequence type="described" ref="VSP_026638"/>
    </isoform>
</comment>
<comment type="tissue specificity">
    <text evidence="4 5">Expressed in spermatozoa (at protein level).</text>
</comment>
<comment type="domain">
    <text evidence="1">The TPR repeats are required for axonemal localization and flagellar beating.</text>
</comment>
<comment type="disease" evidence="4 5">
    <disease id="DI-05739">
        <name>Spermatogenic failure 42</name>
        <acronym>SPGF42</acronym>
        <description>An autosomal recessive infertility disorder characterized by almost immotile spermatozoa due to multiple morphologic abnormalities of the flagella, including short, absent, coiled, and bent flagella. Some spermatozoa also show abnormalities of the head, acrosome, midpiece, or endpiece.</description>
        <dbReference type="MIM" id="618745"/>
    </disease>
    <text>The disease is caused by variants affecting the gene represented in this entry.</text>
</comment>
<comment type="sequence caution" evidence="10">
    <conflict type="frameshift">
        <sequence resource="EMBL-CDS" id="AAK29064"/>
    </conflict>
</comment>
<keyword id="KW-0002">3D-structure</keyword>
<keyword id="KW-0025">Alternative splicing</keyword>
<keyword id="KW-0966">Cell projection</keyword>
<keyword id="KW-0969">Cilium</keyword>
<keyword id="KW-0963">Cytoplasm</keyword>
<keyword id="KW-0206">Cytoskeleton</keyword>
<keyword id="KW-0225">Disease variant</keyword>
<keyword id="KW-0282">Flagellum</keyword>
<keyword id="KW-1267">Proteomics identification</keyword>
<keyword id="KW-1185">Reference proteome</keyword>
<keyword id="KW-0677">Repeat</keyword>
<keyword id="KW-0802">TPR repeat</keyword>
<gene>
    <name type="primary">TTC29</name>
</gene>
<feature type="chain" id="PRO_0000294435" description="Tetratricopeptide repeat protein 29">
    <location>
        <begin position="1"/>
        <end position="475"/>
    </location>
</feature>
<feature type="repeat" description="TPR 1" evidence="11">
    <location>
        <begin position="92"/>
        <end position="131"/>
    </location>
</feature>
<feature type="repeat" description="TPR 2" evidence="11">
    <location>
        <begin position="136"/>
        <end position="173"/>
    </location>
</feature>
<feature type="repeat" description="TPR 3" evidence="2">
    <location>
        <begin position="182"/>
        <end position="215"/>
    </location>
</feature>
<feature type="repeat" description="TPR 4" evidence="2">
    <location>
        <begin position="234"/>
        <end position="267"/>
    </location>
</feature>
<feature type="repeat" description="TPR 5" evidence="2">
    <location>
        <begin position="274"/>
        <end position="307"/>
    </location>
</feature>
<feature type="repeat" description="TPR 6" evidence="2">
    <location>
        <begin position="314"/>
        <end position="347"/>
    </location>
</feature>
<feature type="repeat" description="TPR 7" evidence="2">
    <location>
        <begin position="354"/>
        <end position="387"/>
    </location>
</feature>
<feature type="region of interest" description="Disordered" evidence="3">
    <location>
        <begin position="437"/>
        <end position="475"/>
    </location>
</feature>
<feature type="compositionally biased region" description="Basic and acidic residues" evidence="3">
    <location>
        <begin position="459"/>
        <end position="475"/>
    </location>
</feature>
<feature type="splice variant" id="VSP_026638" description="In isoform 2." evidence="9">
    <original>M</original>
    <variation>MIPMFTVTLEDSGTLWKSLHSSSESE</variation>
    <location>
        <position position="1"/>
    </location>
</feature>
<feature type="sequence variant" id="VAR_033179" description="In dbSNP:rs35123039.">
    <original>L</original>
    <variation>P</variation>
    <location>
        <position position="94"/>
    </location>
</feature>
<feature type="sequence variant" id="VAR_033180" description="In dbSNP:rs17610219." evidence="7 8">
    <original>H</original>
    <variation>Y</variation>
    <location>
        <position position="140"/>
    </location>
</feature>
<feature type="sequence variant" id="VAR_083646" description="In SPGF42." evidence="4">
    <location>
        <begin position="250"/>
        <end position="475"/>
    </location>
</feature>
<feature type="sequence variant" id="VAR_033181" description="In dbSNP:rs10013280." evidence="7 8">
    <original>A</original>
    <variation>T</variation>
    <location>
        <position position="276"/>
    </location>
</feature>
<feature type="sequence variant" id="VAR_083647" description="In SPGF42; loss of protein expression." evidence="5">
    <location>
        <begin position="369"/>
        <end position="475"/>
    </location>
</feature>
<feature type="sequence conflict" description="In Ref. 3; BAC04072." evidence="10" ref="3">
    <original>L</original>
    <variation>F</variation>
    <location>
        <position position="239"/>
    </location>
</feature>
<accession>Q8NA56</accession>
<accession>A4GU95</accession>
<accession>Q9BXB6</accession>
<dbReference type="EMBL" id="AF345910">
    <property type="protein sequence ID" value="AAK29064.1"/>
    <property type="status" value="ALT_FRAME"/>
    <property type="molecule type" value="mRNA"/>
</dbReference>
<dbReference type="EMBL" id="EF432564">
    <property type="protein sequence ID" value="ABO31099.1"/>
    <property type="molecule type" value="mRNA"/>
</dbReference>
<dbReference type="EMBL" id="AK093145">
    <property type="protein sequence ID" value="BAC04072.1"/>
    <property type="molecule type" value="mRNA"/>
</dbReference>
<dbReference type="EMBL" id="AC092435">
    <property type="status" value="NOT_ANNOTATED_CDS"/>
    <property type="molecule type" value="Genomic_DNA"/>
</dbReference>
<dbReference type="EMBL" id="AC097497">
    <property type="status" value="NOT_ANNOTATED_CDS"/>
    <property type="molecule type" value="Genomic_DNA"/>
</dbReference>
<dbReference type="EMBL" id="AC093887">
    <property type="status" value="NOT_ANNOTATED_CDS"/>
    <property type="molecule type" value="Genomic_DNA"/>
</dbReference>
<dbReference type="CCDS" id="CCDS47141.1">
    <molecule id="Q8NA56-1"/>
</dbReference>
<dbReference type="RefSeq" id="NP_001287690.1">
    <property type="nucleotide sequence ID" value="NM_001300761.2"/>
</dbReference>
<dbReference type="RefSeq" id="NP_001304735.1">
    <property type="nucleotide sequence ID" value="NM_001317806.1"/>
</dbReference>
<dbReference type="RefSeq" id="NP_114162.2">
    <molecule id="Q8NA56-1"/>
    <property type="nucleotide sequence ID" value="NM_031956.4"/>
</dbReference>
<dbReference type="PDB" id="8J07">
    <property type="method" value="EM"/>
    <property type="resolution" value="4.10 A"/>
    <property type="chains" value="d3=1-475"/>
</dbReference>
<dbReference type="PDBsum" id="8J07"/>
<dbReference type="EMDB" id="EMD-35888"/>
<dbReference type="SMR" id="Q8NA56"/>
<dbReference type="BioGRID" id="123805">
    <property type="interactions" value="21"/>
</dbReference>
<dbReference type="FunCoup" id="Q8NA56">
    <property type="interactions" value="15"/>
</dbReference>
<dbReference type="IntAct" id="Q8NA56">
    <property type="interactions" value="11"/>
</dbReference>
<dbReference type="STRING" id="9606.ENSP00000423505"/>
<dbReference type="GlyCosmos" id="Q8NA56">
    <property type="glycosylation" value="1 site, 1 glycan"/>
</dbReference>
<dbReference type="GlyGen" id="Q8NA56">
    <property type="glycosylation" value="1 site, 1 O-linked glycan (1 site)"/>
</dbReference>
<dbReference type="iPTMnet" id="Q8NA56"/>
<dbReference type="PhosphoSitePlus" id="Q8NA56"/>
<dbReference type="BioMuta" id="TTC29"/>
<dbReference type="DMDM" id="152112335"/>
<dbReference type="MassIVE" id="Q8NA56"/>
<dbReference type="PaxDb" id="9606-ENSP00000423505"/>
<dbReference type="PeptideAtlas" id="Q8NA56"/>
<dbReference type="ProteomicsDB" id="72640">
    <molecule id="Q8NA56-1"/>
</dbReference>
<dbReference type="ProteomicsDB" id="72641">
    <molecule id="Q8NA56-2"/>
</dbReference>
<dbReference type="Antibodypedia" id="49071">
    <property type="antibodies" value="23 antibodies from 12 providers"/>
</dbReference>
<dbReference type="DNASU" id="83894"/>
<dbReference type="Ensembl" id="ENST00000325106.9">
    <molecule id="Q8NA56-1"/>
    <property type="protein sequence ID" value="ENSP00000316740.4"/>
    <property type="gene ID" value="ENSG00000137473.19"/>
</dbReference>
<dbReference type="GeneID" id="83894"/>
<dbReference type="KEGG" id="hsa:83894"/>
<dbReference type="MANE-Select" id="ENST00000325106.9">
    <property type="protein sequence ID" value="ENSP00000316740.4"/>
    <property type="RefSeq nucleotide sequence ID" value="NM_031956.4"/>
    <property type="RefSeq protein sequence ID" value="NP_114162.2"/>
</dbReference>
<dbReference type="UCSC" id="uc003ikw.5">
    <molecule id="Q8NA56-1"/>
    <property type="organism name" value="human"/>
</dbReference>
<dbReference type="AGR" id="HGNC:29936"/>
<dbReference type="CTD" id="83894"/>
<dbReference type="DisGeNET" id="83894"/>
<dbReference type="GeneCards" id="TTC29"/>
<dbReference type="HGNC" id="HGNC:29936">
    <property type="gene designation" value="TTC29"/>
</dbReference>
<dbReference type="HPA" id="ENSG00000137473">
    <property type="expression patterns" value="Group enriched (fallopian tube, testis)"/>
</dbReference>
<dbReference type="MalaCards" id="TTC29"/>
<dbReference type="MIM" id="618735">
    <property type="type" value="gene"/>
</dbReference>
<dbReference type="MIM" id="618745">
    <property type="type" value="phenotype"/>
</dbReference>
<dbReference type="neXtProt" id="NX_Q8NA56"/>
<dbReference type="OpenTargets" id="ENSG00000137473"/>
<dbReference type="Orphanet" id="276234">
    <property type="disease" value="Non-syndromic male infertility due to sperm motility disorder"/>
</dbReference>
<dbReference type="PharmGKB" id="PA145147799"/>
<dbReference type="VEuPathDB" id="HostDB:ENSG00000137473"/>
<dbReference type="eggNOG" id="ENOG502QQ2U">
    <property type="taxonomic scope" value="Eukaryota"/>
</dbReference>
<dbReference type="GeneTree" id="ENSGT00390000008611"/>
<dbReference type="InParanoid" id="Q8NA56"/>
<dbReference type="OMA" id="QLAWMSG"/>
<dbReference type="OrthoDB" id="626167at2759"/>
<dbReference type="PAN-GO" id="Q8NA56">
    <property type="GO annotations" value="2 GO annotations based on evolutionary models"/>
</dbReference>
<dbReference type="PhylomeDB" id="Q8NA56"/>
<dbReference type="TreeFam" id="TF328344"/>
<dbReference type="PathwayCommons" id="Q8NA56"/>
<dbReference type="SignaLink" id="Q8NA56"/>
<dbReference type="BioGRID-ORCS" id="83894">
    <property type="hits" value="10 hits in 1110 CRISPR screens"/>
</dbReference>
<dbReference type="ChiTaRS" id="TTC29">
    <property type="organism name" value="human"/>
</dbReference>
<dbReference type="GenomeRNAi" id="83894"/>
<dbReference type="Pharos" id="Q8NA56">
    <property type="development level" value="Tdark"/>
</dbReference>
<dbReference type="PRO" id="PR:Q8NA56"/>
<dbReference type="Proteomes" id="UP000005640">
    <property type="component" value="Chromosome 4"/>
</dbReference>
<dbReference type="RNAct" id="Q8NA56">
    <property type="molecule type" value="protein"/>
</dbReference>
<dbReference type="Bgee" id="ENSG00000137473">
    <property type="expression patterns" value="Expressed in sperm and 86 other cell types or tissues"/>
</dbReference>
<dbReference type="ExpressionAtlas" id="Q8NA56">
    <property type="expression patterns" value="baseline and differential"/>
</dbReference>
<dbReference type="GO" id="GO:0005737">
    <property type="term" value="C:cytoplasm"/>
    <property type="evidence" value="ECO:0007669"/>
    <property type="project" value="UniProtKB-KW"/>
</dbReference>
<dbReference type="GO" id="GO:0005856">
    <property type="term" value="C:cytoskeleton"/>
    <property type="evidence" value="ECO:0007669"/>
    <property type="project" value="UniProtKB-KW"/>
</dbReference>
<dbReference type="GO" id="GO:0036126">
    <property type="term" value="C:sperm flagellum"/>
    <property type="evidence" value="ECO:0000314"/>
    <property type="project" value="UniProtKB"/>
</dbReference>
<dbReference type="GO" id="GO:0003341">
    <property type="term" value="P:cilium movement"/>
    <property type="evidence" value="ECO:0000314"/>
    <property type="project" value="UniProtKB"/>
</dbReference>
<dbReference type="GO" id="GO:0044782">
    <property type="term" value="P:cilium organization"/>
    <property type="evidence" value="ECO:0000314"/>
    <property type="project" value="UniProtKB"/>
</dbReference>
<dbReference type="Gene3D" id="1.25.40.10">
    <property type="entry name" value="Tetratricopeptide repeat domain"/>
    <property type="match status" value="2"/>
</dbReference>
<dbReference type="InterPro" id="IPR051476">
    <property type="entry name" value="Bac_ResReg_Asp_Phosphatase"/>
</dbReference>
<dbReference type="InterPro" id="IPR011990">
    <property type="entry name" value="TPR-like_helical_dom_sf"/>
</dbReference>
<dbReference type="InterPro" id="IPR019734">
    <property type="entry name" value="TPR_rpt"/>
</dbReference>
<dbReference type="PANTHER" id="PTHR46630">
    <property type="entry name" value="TETRATRICOPEPTIDE REPEAT PROTEIN 29"/>
    <property type="match status" value="1"/>
</dbReference>
<dbReference type="PANTHER" id="PTHR46630:SF1">
    <property type="entry name" value="TETRATRICOPEPTIDE REPEAT PROTEIN 29"/>
    <property type="match status" value="1"/>
</dbReference>
<dbReference type="Pfam" id="PF13424">
    <property type="entry name" value="TPR_12"/>
    <property type="match status" value="1"/>
</dbReference>
<dbReference type="Pfam" id="PF13432">
    <property type="entry name" value="TPR_16"/>
    <property type="match status" value="1"/>
</dbReference>
<dbReference type="SMART" id="SM00028">
    <property type="entry name" value="TPR"/>
    <property type="match status" value="4"/>
</dbReference>
<dbReference type="SUPFAM" id="SSF48452">
    <property type="entry name" value="TPR-like"/>
    <property type="match status" value="1"/>
</dbReference>
<dbReference type="PROSITE" id="PS50293">
    <property type="entry name" value="TPR_REGION"/>
    <property type="match status" value="2"/>
</dbReference>
<organism>
    <name type="scientific">Homo sapiens</name>
    <name type="common">Human</name>
    <dbReference type="NCBI Taxonomy" id="9606"/>
    <lineage>
        <taxon>Eukaryota</taxon>
        <taxon>Metazoa</taxon>
        <taxon>Chordata</taxon>
        <taxon>Craniata</taxon>
        <taxon>Vertebrata</taxon>
        <taxon>Euteleostomi</taxon>
        <taxon>Mammalia</taxon>
        <taxon>Eutheria</taxon>
        <taxon>Euarchontoglires</taxon>
        <taxon>Primates</taxon>
        <taxon>Haplorrhini</taxon>
        <taxon>Catarrhini</taxon>
        <taxon>Hominidae</taxon>
        <taxon>Homo</taxon>
    </lineage>
</organism>
<sequence length="475" mass="55082">MTTLPPLPMTRPKLTALARQKLPCSSRKIPRSQLIKEKDDIDHYLEVNFKGLSKEEVAAYRNSYKKNICVDMLRDGYHKSFTELFALMERWDALREAARVRSLFWLQKPLEEQPDKLDYLYHYLTRAEDAERKESFEDVHNNLYALACYFNNSEDKWVRNHFYERCFKIAQLIKIDCGKKEAEAHMHMGLLYEEDGQLLEAAEHYEAFHQLTQGRIWKDETGRSLNLLACESLLRTYRLLSDKMLENKEYKQAIKILIKASEIAKEGSDKKMEAEASYYLGLAHLAAEEYETALTVLDTYCKISTDLDDDLSLGRGYEAIAKVLQSQGEMTEAIKYLKKFVKIARNNFQSLDLVRASTMLGDIYNEKGYYNKASECFQQAFDTTVELMSMPLMDETKVHYGIAKAHQMMLTVNNYIESADLTSLNYLLSWKESRGNIEPDPVTEEFRGSTVEAVSQNSERLEELSRFPGDQKNET</sequence>